<dbReference type="EC" id="3.5.1.103" evidence="1"/>
<dbReference type="EMBL" id="CP001700">
    <property type="protein sequence ID" value="ACU69691.1"/>
    <property type="molecule type" value="Genomic_DNA"/>
</dbReference>
<dbReference type="RefSeq" id="WP_012784986.1">
    <property type="nucleotide sequence ID" value="NC_013131.1"/>
</dbReference>
<dbReference type="SMR" id="C7Q0R3"/>
<dbReference type="STRING" id="479433.Caci_0756"/>
<dbReference type="KEGG" id="cai:Caci_0756"/>
<dbReference type="eggNOG" id="COG2120">
    <property type="taxonomic scope" value="Bacteria"/>
</dbReference>
<dbReference type="HOGENOM" id="CLU_049311_2_1_11"/>
<dbReference type="InParanoid" id="C7Q0R3"/>
<dbReference type="OrthoDB" id="158614at2"/>
<dbReference type="Proteomes" id="UP000000851">
    <property type="component" value="Chromosome"/>
</dbReference>
<dbReference type="GO" id="GO:0035595">
    <property type="term" value="F:N-acetylglucosaminylinositol deacetylase activity"/>
    <property type="evidence" value="ECO:0007669"/>
    <property type="project" value="UniProtKB-EC"/>
</dbReference>
<dbReference type="GO" id="GO:0008270">
    <property type="term" value="F:zinc ion binding"/>
    <property type="evidence" value="ECO:0007669"/>
    <property type="project" value="UniProtKB-UniRule"/>
</dbReference>
<dbReference type="GO" id="GO:0010125">
    <property type="term" value="P:mycothiol biosynthetic process"/>
    <property type="evidence" value="ECO:0007669"/>
    <property type="project" value="UniProtKB-UniRule"/>
</dbReference>
<dbReference type="Gene3D" id="3.40.50.10320">
    <property type="entry name" value="LmbE-like"/>
    <property type="match status" value="1"/>
</dbReference>
<dbReference type="HAMAP" id="MF_01696">
    <property type="entry name" value="MshB"/>
    <property type="match status" value="1"/>
</dbReference>
<dbReference type="InterPro" id="IPR003737">
    <property type="entry name" value="GlcNAc_PI_deacetylase-related"/>
</dbReference>
<dbReference type="InterPro" id="IPR024078">
    <property type="entry name" value="LmbE-like_dom_sf"/>
</dbReference>
<dbReference type="InterPro" id="IPR017810">
    <property type="entry name" value="Mycothiol_biosynthesis_MshB"/>
</dbReference>
<dbReference type="NCBIfam" id="TIGR03445">
    <property type="entry name" value="mycothiol_MshB"/>
    <property type="match status" value="1"/>
</dbReference>
<dbReference type="PANTHER" id="PTHR12993:SF26">
    <property type="entry name" value="1D-MYO-INOSITOL 2-ACETAMIDO-2-DEOXY-ALPHA-D-GLUCOPYRANOSIDE DEACETYLASE"/>
    <property type="match status" value="1"/>
</dbReference>
<dbReference type="PANTHER" id="PTHR12993">
    <property type="entry name" value="N-ACETYLGLUCOSAMINYL-PHOSPHATIDYLINOSITOL DE-N-ACETYLASE-RELATED"/>
    <property type="match status" value="1"/>
</dbReference>
<dbReference type="Pfam" id="PF02585">
    <property type="entry name" value="PIG-L"/>
    <property type="match status" value="1"/>
</dbReference>
<dbReference type="SUPFAM" id="SSF102588">
    <property type="entry name" value="LmbE-like"/>
    <property type="match status" value="1"/>
</dbReference>
<proteinExistence type="inferred from homology"/>
<evidence type="ECO:0000255" key="1">
    <source>
        <dbReference type="HAMAP-Rule" id="MF_01696"/>
    </source>
</evidence>
<feature type="chain" id="PRO_0000400173" description="1D-myo-inositol 2-acetamido-2-deoxy-alpha-D-glucopyranoside deacetylase 1">
    <location>
        <begin position="1"/>
        <end position="323"/>
    </location>
</feature>
<feature type="binding site" evidence="1">
    <location>
        <position position="30"/>
    </location>
    <ligand>
        <name>Zn(2+)</name>
        <dbReference type="ChEBI" id="CHEBI:29105"/>
    </ligand>
</feature>
<feature type="binding site" evidence="1">
    <location>
        <position position="33"/>
    </location>
    <ligand>
        <name>Zn(2+)</name>
        <dbReference type="ChEBI" id="CHEBI:29105"/>
    </ligand>
</feature>
<feature type="binding site" evidence="1">
    <location>
        <position position="165"/>
    </location>
    <ligand>
        <name>Zn(2+)</name>
        <dbReference type="ChEBI" id="CHEBI:29105"/>
    </ligand>
</feature>
<gene>
    <name evidence="1" type="primary">mshB1</name>
    <name type="ordered locus">Caci_0756</name>
</gene>
<sequence length="323" mass="34064">MTATTTAQPSGPVPPASPTAARRLLLVHAHPDDEVITTGATMAAYAAEGAHVTLVTCTAGEEGEVLVPELAHLAADREDRLAEIRVVELANAMTALGVADHRFLGGVGCYRDSGMMGTPANDKPHAFWRADLDEAAAHLVKVVREIRPQVLVTYDENGGYGHPDHIQAHRVAMRAAELAADPAFAPEHGAVWDVAKIYWTAMPESVLAEGIQALKEAGDTSGFIAVESVEDLSFGTDDALVTTTIDGTAYMENKREGMRAYPTQISMGQGFFALSNSIGMEFMAHEFYQLVKGAAEGSDTGLEKDLFAGLGIADGTAAGVSQG</sequence>
<organism>
    <name type="scientific">Catenulispora acidiphila (strain DSM 44928 / JCM 14897 / NBRC 102108 / NRRL B-24433 / ID139908)</name>
    <dbReference type="NCBI Taxonomy" id="479433"/>
    <lineage>
        <taxon>Bacteria</taxon>
        <taxon>Bacillati</taxon>
        <taxon>Actinomycetota</taxon>
        <taxon>Actinomycetes</taxon>
        <taxon>Catenulisporales</taxon>
        <taxon>Catenulisporaceae</taxon>
        <taxon>Catenulispora</taxon>
    </lineage>
</organism>
<reference key="1">
    <citation type="journal article" date="2009" name="Stand. Genomic Sci.">
        <title>Complete genome sequence of Catenulispora acidiphila type strain (ID 139908).</title>
        <authorList>
            <person name="Copeland A."/>
            <person name="Lapidus A."/>
            <person name="Glavina Del Rio T."/>
            <person name="Nolan M."/>
            <person name="Lucas S."/>
            <person name="Chen F."/>
            <person name="Tice H."/>
            <person name="Cheng J.F."/>
            <person name="Bruce D."/>
            <person name="Goodwin L."/>
            <person name="Pitluck S."/>
            <person name="Mikhailova N."/>
            <person name="Pati A."/>
            <person name="Ivanova N."/>
            <person name="Mavromatis K."/>
            <person name="Chen A."/>
            <person name="Palaniappan K."/>
            <person name="Chain P."/>
            <person name="Land M."/>
            <person name="Hauser L."/>
            <person name="Chang Y.J."/>
            <person name="Jeffries C.D."/>
            <person name="Chertkov O."/>
            <person name="Brettin T."/>
            <person name="Detter J.C."/>
            <person name="Han C."/>
            <person name="Ali Z."/>
            <person name="Tindall B.J."/>
            <person name="Goker M."/>
            <person name="Bristow J."/>
            <person name="Eisen J.A."/>
            <person name="Markowitz V."/>
            <person name="Hugenholtz P."/>
            <person name="Kyrpides N.C."/>
            <person name="Klenk H.P."/>
        </authorList>
    </citation>
    <scope>NUCLEOTIDE SEQUENCE [LARGE SCALE GENOMIC DNA]</scope>
    <source>
        <strain>DSM 44928 / JCM 14897 / NBRC 102108 / NRRL B-24433 / ID139908</strain>
    </source>
</reference>
<accession>C7Q0R3</accession>
<protein>
    <recommendedName>
        <fullName evidence="1">1D-myo-inositol 2-acetamido-2-deoxy-alpha-D-glucopyranoside deacetylase 1</fullName>
        <shortName evidence="1">GlcNAc-Ins deacetylase 1</shortName>
        <ecNumber evidence="1">3.5.1.103</ecNumber>
    </recommendedName>
    <alternativeName>
        <fullName>N-acetyl-1-D-myo-inositol 2-amino-2-deoxy-alpha-D-glucopyranoside deacetylase 1</fullName>
    </alternativeName>
</protein>
<comment type="function">
    <text evidence="1">Catalyzes the deacetylation of 1D-myo-inositol 2-acetamido-2-deoxy-alpha-D-glucopyranoside (GlcNAc-Ins) in the mycothiol biosynthesis pathway.</text>
</comment>
<comment type="catalytic activity">
    <reaction evidence="1">
        <text>1D-myo-inositol 2-acetamido-2-deoxy-alpha-D-glucopyranoside + H2O = 1D-myo-inositol 2-amino-2-deoxy-alpha-D-glucopyranoside + acetate</text>
        <dbReference type="Rhea" id="RHEA:26180"/>
        <dbReference type="ChEBI" id="CHEBI:15377"/>
        <dbReference type="ChEBI" id="CHEBI:30089"/>
        <dbReference type="ChEBI" id="CHEBI:52442"/>
        <dbReference type="ChEBI" id="CHEBI:58886"/>
        <dbReference type="EC" id="3.5.1.103"/>
    </reaction>
</comment>
<comment type="cofactor">
    <cofactor evidence="1">
        <name>Zn(2+)</name>
        <dbReference type="ChEBI" id="CHEBI:29105"/>
    </cofactor>
    <text evidence="1">Binds 1 zinc ion per subunit.</text>
</comment>
<comment type="similarity">
    <text evidence="1">Belongs to the MshB deacetylase family.</text>
</comment>
<name>MSHB1_CATAD</name>
<keyword id="KW-0378">Hydrolase</keyword>
<keyword id="KW-0479">Metal-binding</keyword>
<keyword id="KW-1185">Reference proteome</keyword>
<keyword id="KW-0862">Zinc</keyword>